<dbReference type="EMBL" id="AK028826">
    <property type="protein sequence ID" value="BAC26140.1"/>
    <property type="molecule type" value="mRNA"/>
</dbReference>
<dbReference type="EMBL" id="AK032634">
    <property type="protein sequence ID" value="BAC27961.1"/>
    <property type="molecule type" value="mRNA"/>
</dbReference>
<dbReference type="EMBL" id="AK041504">
    <property type="protein sequence ID" value="BAC30966.1"/>
    <property type="molecule type" value="mRNA"/>
</dbReference>
<dbReference type="EMBL" id="AK043259">
    <property type="protein sequence ID" value="BAC31506.1"/>
    <property type="molecule type" value="mRNA"/>
</dbReference>
<dbReference type="EMBL" id="BC012284">
    <property type="protein sequence ID" value="AAH12284.1"/>
    <property type="molecule type" value="mRNA"/>
</dbReference>
<dbReference type="EMBL" id="BC034733">
    <property type="protein sequence ID" value="AAH34733.1"/>
    <property type="molecule type" value="mRNA"/>
</dbReference>
<dbReference type="CCDS" id="CCDS15147.1"/>
<dbReference type="RefSeq" id="NP_001407762.1">
    <property type="nucleotide sequence ID" value="NM_001420833.1"/>
</dbReference>
<dbReference type="RefSeq" id="NP_001407763.1">
    <property type="nucleotide sequence ID" value="NM_001420834.1"/>
</dbReference>
<dbReference type="RefSeq" id="NP_001407764.1">
    <property type="nucleotide sequence ID" value="NM_001420835.1"/>
</dbReference>
<dbReference type="RefSeq" id="NP_598577.1">
    <property type="nucleotide sequence ID" value="NM_133816.4"/>
</dbReference>
<dbReference type="RefSeq" id="XP_006530038.1">
    <property type="nucleotide sequence ID" value="XM_006529975.3"/>
</dbReference>
<dbReference type="SMR" id="Q921I6"/>
<dbReference type="BioGRID" id="221051">
    <property type="interactions" value="6"/>
</dbReference>
<dbReference type="FunCoup" id="Q921I6">
    <property type="interactions" value="784"/>
</dbReference>
<dbReference type="STRING" id="10090.ENSMUSP00000067581"/>
<dbReference type="GlyGen" id="Q921I6">
    <property type="glycosylation" value="2 sites, 1 N-linked glycan (1 site)"/>
</dbReference>
<dbReference type="iPTMnet" id="Q921I6"/>
<dbReference type="PhosphoSitePlus" id="Q921I6"/>
<dbReference type="jPOST" id="Q921I6"/>
<dbReference type="PaxDb" id="10090-ENSMUSP00000067581"/>
<dbReference type="PeptideAtlas" id="Q921I6"/>
<dbReference type="ProteomicsDB" id="261344"/>
<dbReference type="Pumba" id="Q921I6"/>
<dbReference type="Antibodypedia" id="34462">
    <property type="antibodies" value="183 antibodies from 31 providers"/>
</dbReference>
<dbReference type="DNASU" id="98402"/>
<dbReference type="Ensembl" id="ENSMUST00000066279.11">
    <property type="protein sequence ID" value="ENSMUSP00000067581.5"/>
    <property type="gene ID" value="ENSMUSG00000036206.13"/>
</dbReference>
<dbReference type="GeneID" id="98402"/>
<dbReference type="KEGG" id="mmu:98402"/>
<dbReference type="UCSC" id="uc007byv.1">
    <property type="organism name" value="mouse"/>
</dbReference>
<dbReference type="AGR" id="MGI:2138297"/>
<dbReference type="CTD" id="23677"/>
<dbReference type="MGI" id="MGI:2138297">
    <property type="gene designation" value="Sh3bp4"/>
</dbReference>
<dbReference type="VEuPathDB" id="HostDB:ENSMUSG00000036206"/>
<dbReference type="eggNOG" id="ENOG502QTUW">
    <property type="taxonomic scope" value="Eukaryota"/>
</dbReference>
<dbReference type="GeneTree" id="ENSGT00390000013151"/>
<dbReference type="HOGENOM" id="CLU_013080_2_0_1"/>
<dbReference type="InParanoid" id="Q921I6"/>
<dbReference type="OMA" id="RQNKSHY"/>
<dbReference type="OrthoDB" id="10000126at2759"/>
<dbReference type="PhylomeDB" id="Q921I6"/>
<dbReference type="TreeFam" id="TF105572"/>
<dbReference type="Reactome" id="R-MMU-9639288">
    <property type="pathway name" value="Amino acids regulate mTORC1"/>
</dbReference>
<dbReference type="BioGRID-ORCS" id="98402">
    <property type="hits" value="1 hit in 76 CRISPR screens"/>
</dbReference>
<dbReference type="ChiTaRS" id="Sh3bp4">
    <property type="organism name" value="mouse"/>
</dbReference>
<dbReference type="PRO" id="PR:Q921I6"/>
<dbReference type="Proteomes" id="UP000000589">
    <property type="component" value="Chromosome 1"/>
</dbReference>
<dbReference type="RNAct" id="Q921I6">
    <property type="molecule type" value="protein"/>
</dbReference>
<dbReference type="Bgee" id="ENSMUSG00000036206">
    <property type="expression patterns" value="Expressed in lacrimal gland and 213 other cell types or tissues"/>
</dbReference>
<dbReference type="GO" id="GO:0005905">
    <property type="term" value="C:clathrin-coated pit"/>
    <property type="evidence" value="ECO:0007669"/>
    <property type="project" value="UniProtKB-SubCell"/>
</dbReference>
<dbReference type="GO" id="GO:0030136">
    <property type="term" value="C:clathrin-coated vesicle"/>
    <property type="evidence" value="ECO:0007669"/>
    <property type="project" value="UniProtKB-SubCell"/>
</dbReference>
<dbReference type="GO" id="GO:0005737">
    <property type="term" value="C:cytoplasm"/>
    <property type="evidence" value="ECO:0000250"/>
    <property type="project" value="UniProtKB"/>
</dbReference>
<dbReference type="GO" id="GO:0005634">
    <property type="term" value="C:nucleus"/>
    <property type="evidence" value="ECO:0007669"/>
    <property type="project" value="UniProtKB-SubCell"/>
</dbReference>
<dbReference type="GO" id="GO:0005092">
    <property type="term" value="F:GDP-dissociation inhibitor activity"/>
    <property type="evidence" value="ECO:0000250"/>
    <property type="project" value="UniProtKB"/>
</dbReference>
<dbReference type="GO" id="GO:0042802">
    <property type="term" value="F:identical protein binding"/>
    <property type="evidence" value="ECO:0007669"/>
    <property type="project" value="Ensembl"/>
</dbReference>
<dbReference type="GO" id="GO:0031267">
    <property type="term" value="F:small GTPase binding"/>
    <property type="evidence" value="ECO:0007669"/>
    <property type="project" value="Ensembl"/>
</dbReference>
<dbReference type="GO" id="GO:0071230">
    <property type="term" value="P:cellular response to amino acid stimulus"/>
    <property type="evidence" value="ECO:0000250"/>
    <property type="project" value="UniProtKB"/>
</dbReference>
<dbReference type="GO" id="GO:0006897">
    <property type="term" value="P:endocytosis"/>
    <property type="evidence" value="ECO:0007669"/>
    <property type="project" value="UniProtKB-KW"/>
</dbReference>
<dbReference type="GO" id="GO:0030308">
    <property type="term" value="P:negative regulation of cell growth"/>
    <property type="evidence" value="ECO:0000250"/>
    <property type="project" value="UniProtKB"/>
</dbReference>
<dbReference type="GO" id="GO:0008285">
    <property type="term" value="P:negative regulation of cell population proliferation"/>
    <property type="evidence" value="ECO:0000250"/>
    <property type="project" value="UniProtKB"/>
</dbReference>
<dbReference type="GO" id="GO:0034260">
    <property type="term" value="P:negative regulation of GTPase activity"/>
    <property type="evidence" value="ECO:0000250"/>
    <property type="project" value="UniProtKB"/>
</dbReference>
<dbReference type="GO" id="GO:0032007">
    <property type="term" value="P:negative regulation of TOR signaling"/>
    <property type="evidence" value="ECO:0000250"/>
    <property type="project" value="UniProtKB"/>
</dbReference>
<dbReference type="GO" id="GO:0010508">
    <property type="term" value="P:positive regulation of autophagy"/>
    <property type="evidence" value="ECO:0000250"/>
    <property type="project" value="UniProtKB"/>
</dbReference>
<dbReference type="GO" id="GO:0061462">
    <property type="term" value="P:protein localization to lysosome"/>
    <property type="evidence" value="ECO:0000250"/>
    <property type="project" value="UniProtKB"/>
</dbReference>
<dbReference type="GO" id="GO:0050790">
    <property type="term" value="P:regulation of catalytic activity"/>
    <property type="evidence" value="ECO:0000250"/>
    <property type="project" value="UniProtKB"/>
</dbReference>
<dbReference type="CDD" id="cd11757">
    <property type="entry name" value="SH3_SH3BP4"/>
    <property type="match status" value="1"/>
</dbReference>
<dbReference type="FunFam" id="2.30.30.40:FF:000117">
    <property type="entry name" value="SH3 domain-binding protein 4"/>
    <property type="match status" value="1"/>
</dbReference>
<dbReference type="FunFam" id="2.60.220.30:FF:000008">
    <property type="entry name" value="SH3 domain-binding protein 4"/>
    <property type="match status" value="1"/>
</dbReference>
<dbReference type="Gene3D" id="2.60.220.30">
    <property type="match status" value="1"/>
</dbReference>
<dbReference type="Gene3D" id="2.30.30.40">
    <property type="entry name" value="SH3 Domains"/>
    <property type="match status" value="1"/>
</dbReference>
<dbReference type="InterPro" id="IPR056183">
    <property type="entry name" value="DEATH_SH3BP4"/>
</dbReference>
<dbReference type="InterPro" id="IPR036028">
    <property type="entry name" value="SH3-like_dom_sf"/>
</dbReference>
<dbReference type="InterPro" id="IPR001452">
    <property type="entry name" value="SH3_domain"/>
</dbReference>
<dbReference type="InterPro" id="IPR056181">
    <property type="entry name" value="SH3BP4_C"/>
</dbReference>
<dbReference type="InterPro" id="IPR035456">
    <property type="entry name" value="SH3BP4_SH3"/>
</dbReference>
<dbReference type="InterPro" id="IPR056182">
    <property type="entry name" value="UPA_SH3BP4"/>
</dbReference>
<dbReference type="InterPro" id="IPR000906">
    <property type="entry name" value="ZU5_dom"/>
</dbReference>
<dbReference type="PANTHER" id="PTHR15603:SF3">
    <property type="entry name" value="SH3 DOMAIN-BINDING PROTEIN 4"/>
    <property type="match status" value="1"/>
</dbReference>
<dbReference type="PANTHER" id="PTHR15603">
    <property type="entry name" value="SH3 DOMAIN-CONTAINING PROTEIN"/>
    <property type="match status" value="1"/>
</dbReference>
<dbReference type="Pfam" id="PF24094">
    <property type="entry name" value="DEATH_SH3BP4"/>
    <property type="match status" value="1"/>
</dbReference>
<dbReference type="Pfam" id="PF00018">
    <property type="entry name" value="SH3_1"/>
    <property type="match status" value="1"/>
</dbReference>
<dbReference type="Pfam" id="PF07653">
    <property type="entry name" value="SH3_2"/>
    <property type="match status" value="1"/>
</dbReference>
<dbReference type="Pfam" id="PF23637">
    <property type="entry name" value="SH3BP4_C"/>
    <property type="match status" value="1"/>
</dbReference>
<dbReference type="Pfam" id="PF23640">
    <property type="entry name" value="UPA_SH3BP4"/>
    <property type="match status" value="1"/>
</dbReference>
<dbReference type="Pfam" id="PF00791">
    <property type="entry name" value="ZU5"/>
    <property type="match status" value="1"/>
</dbReference>
<dbReference type="SMART" id="SM00326">
    <property type="entry name" value="SH3"/>
    <property type="match status" value="1"/>
</dbReference>
<dbReference type="SUPFAM" id="SSF50044">
    <property type="entry name" value="SH3-domain"/>
    <property type="match status" value="1"/>
</dbReference>
<dbReference type="PROSITE" id="PS50002">
    <property type="entry name" value="SH3"/>
    <property type="match status" value="2"/>
</dbReference>
<dbReference type="PROSITE" id="PS51145">
    <property type="entry name" value="ZU5"/>
    <property type="match status" value="1"/>
</dbReference>
<accession>Q921I6</accession>
<accession>Q8BXV5</accession>
<accession>Q8BY95</accession>
<accession>Q8C007</accession>
<proteinExistence type="evidence at protein level"/>
<protein>
    <recommendedName>
        <fullName>SH3 domain-binding protein 4</fullName>
    </recommendedName>
</protein>
<name>SH3B4_MOUSE</name>
<organism>
    <name type="scientific">Mus musculus</name>
    <name type="common">Mouse</name>
    <dbReference type="NCBI Taxonomy" id="10090"/>
    <lineage>
        <taxon>Eukaryota</taxon>
        <taxon>Metazoa</taxon>
        <taxon>Chordata</taxon>
        <taxon>Craniata</taxon>
        <taxon>Vertebrata</taxon>
        <taxon>Euteleostomi</taxon>
        <taxon>Mammalia</taxon>
        <taxon>Eutheria</taxon>
        <taxon>Euarchontoglires</taxon>
        <taxon>Glires</taxon>
        <taxon>Rodentia</taxon>
        <taxon>Myomorpha</taxon>
        <taxon>Muroidea</taxon>
        <taxon>Muridae</taxon>
        <taxon>Murinae</taxon>
        <taxon>Mus</taxon>
        <taxon>Mus</taxon>
    </lineage>
</organism>
<evidence type="ECO:0000250" key="1"/>
<evidence type="ECO:0000250" key="2">
    <source>
        <dbReference type="UniProtKB" id="Q9P0V3"/>
    </source>
</evidence>
<evidence type="ECO:0000255" key="3">
    <source>
        <dbReference type="PROSITE-ProRule" id="PRU00192"/>
    </source>
</evidence>
<evidence type="ECO:0000255" key="4">
    <source>
        <dbReference type="PROSITE-ProRule" id="PRU00485"/>
    </source>
</evidence>
<evidence type="ECO:0000305" key="5"/>
<evidence type="ECO:0007744" key="6">
    <source>
    </source>
</evidence>
<keyword id="KW-0168">Coated pit</keyword>
<keyword id="KW-0968">Cytoplasmic vesicle</keyword>
<keyword id="KW-0254">Endocytosis</keyword>
<keyword id="KW-0472">Membrane</keyword>
<keyword id="KW-0539">Nucleus</keyword>
<keyword id="KW-0597">Phosphoprotein</keyword>
<keyword id="KW-1185">Reference proteome</keyword>
<keyword id="KW-0677">Repeat</keyword>
<keyword id="KW-0728">SH3 domain</keyword>
<sequence>MAAQRIRAANASGLPRCKSEGTLIDLSEGFSETSFNDVKVPSPSALLVDNPTPFGNAKEVIAIKDYCPNNFTTLKFSKGDHLYVLDTSGGEWWYAHNTTEMGYIPSSYVQPLNYRNSTLSDSGMIDNLPDSPEEVAKELDLLGGGWTDDQKESGRPYSNNPFWNGVRTNPFLNGNAQPSTDELNPKSTVDLLLFDTGTSSFTESSSATTNSTGNIFDELPATNGLQVEQPVKRDNPFFRSKRSYSLSELSVLQAKSDAPPTSSFFTGLKSPVPEQFQSREDFRTAWLNHRKLARSCHDLDLLGQSPGWGQTQAVETNIVCKLDSSGGSVQLPDTNISIHVPEGHVAPGETQQISMKALLDPPLDLNSDRSTSVSPVVEVKLSNLEVSTFIILEMKVSAEVKGDIFSKSTVVLQCLRSDSKEGPYVPIPLAYSYGDTIQVQLDNLEPCMYLAIVAQGPNILYPSTVWDFINKRVTVGLYGPKHIHPSFKTVVTIFGHDCAPKTLLVSEVTRQAPSPAPVALQLWGKHQFILSRPQDLRVCMFSNMTNYEVKANEQARVVRGFQMKLGKVSRLIFSVISQNPNELSDFTLRVQVKDDQDTILTQFCVQTPQPPPKSAIKPSGQRRFLKKNEVGKIILSPFVVTTKYPTFQDRPVSSLKFGKLLKTVVRQNKSHYLLEYKKGDVVALLSEERIRLKGQLWTKEWYIGYYQGKVGLVHTKNVLVVGKARPSLFSGPELSTSVLLEQILRPCKFLTYIYASVRTLLMENISSWRAFADALGYGNLPLTFFCRAELDSEPERVASVLEKLKEDCNNPDNKDRKSFQKELVMALLKMDCQGLVVRLIQDFVLLTTAVEVAQRWRELAEKLAKVSKQQMDAYESPHRDRNGVVDSEAMWKPAYDFLLTWSHQIGDSYRDVIQELHIGLDKMKNPITRRWKHLTGTLILVNSLDILRAAAFSPADHDDFVI</sequence>
<feature type="chain" id="PRO_0000274575" description="SH3 domain-binding protein 4">
    <location>
        <begin position="1"/>
        <end position="962"/>
    </location>
</feature>
<feature type="domain" description="SH3 1" evidence="3">
    <location>
        <begin position="55"/>
        <end position="114"/>
    </location>
</feature>
<feature type="domain" description="ZU5" evidence="4">
    <location>
        <begin position="316"/>
        <end position="453"/>
    </location>
</feature>
<feature type="domain" description="SH3 2" evidence="3">
    <location>
        <begin position="653"/>
        <end position="723"/>
    </location>
</feature>
<feature type="modified residue" description="Phosphoserine" evidence="2">
    <location>
        <position position="131"/>
    </location>
</feature>
<feature type="modified residue" description="Phosphoserine" evidence="6">
    <location>
        <position position="245"/>
    </location>
</feature>
<feature type="modified residue" description="Phosphoserine" evidence="6">
    <location>
        <position position="250"/>
    </location>
</feature>
<feature type="modified residue" description="Phosphoserine" evidence="2">
    <location>
        <position position="278"/>
    </location>
</feature>
<feature type="modified residue" description="Phosphoserine" evidence="6">
    <location>
        <position position="295"/>
    </location>
</feature>
<feature type="modified residue" description="Phosphoserine" evidence="2">
    <location>
        <position position="636"/>
    </location>
</feature>
<feature type="sequence conflict" description="In Ref. 1; BAC30966." evidence="5" ref="1">
    <original>Q</original>
    <variation>K</variation>
    <location>
        <position position="312"/>
    </location>
</feature>
<feature type="sequence conflict" description="In Ref. 1; BAC27961." evidence="5" ref="1">
    <original>V</original>
    <variation>E</variation>
    <location>
        <position position="340"/>
    </location>
</feature>
<feature type="sequence conflict" description="In Ref. 1; BAC27961." evidence="5" ref="1">
    <original>Q</original>
    <variation>K</variation>
    <location>
        <position position="534"/>
    </location>
</feature>
<gene>
    <name type="primary">Sh3bp4</name>
</gene>
<reference key="1">
    <citation type="journal article" date="2005" name="Science">
        <title>The transcriptional landscape of the mammalian genome.</title>
        <authorList>
            <person name="Carninci P."/>
            <person name="Kasukawa T."/>
            <person name="Katayama S."/>
            <person name="Gough J."/>
            <person name="Frith M.C."/>
            <person name="Maeda N."/>
            <person name="Oyama R."/>
            <person name="Ravasi T."/>
            <person name="Lenhard B."/>
            <person name="Wells C."/>
            <person name="Kodzius R."/>
            <person name="Shimokawa K."/>
            <person name="Bajic V.B."/>
            <person name="Brenner S.E."/>
            <person name="Batalov S."/>
            <person name="Forrest A.R."/>
            <person name="Zavolan M."/>
            <person name="Davis M.J."/>
            <person name="Wilming L.G."/>
            <person name="Aidinis V."/>
            <person name="Allen J.E."/>
            <person name="Ambesi-Impiombato A."/>
            <person name="Apweiler R."/>
            <person name="Aturaliya R.N."/>
            <person name="Bailey T.L."/>
            <person name="Bansal M."/>
            <person name="Baxter L."/>
            <person name="Beisel K.W."/>
            <person name="Bersano T."/>
            <person name="Bono H."/>
            <person name="Chalk A.M."/>
            <person name="Chiu K.P."/>
            <person name="Choudhary V."/>
            <person name="Christoffels A."/>
            <person name="Clutterbuck D.R."/>
            <person name="Crowe M.L."/>
            <person name="Dalla E."/>
            <person name="Dalrymple B.P."/>
            <person name="de Bono B."/>
            <person name="Della Gatta G."/>
            <person name="di Bernardo D."/>
            <person name="Down T."/>
            <person name="Engstrom P."/>
            <person name="Fagiolini M."/>
            <person name="Faulkner G."/>
            <person name="Fletcher C.F."/>
            <person name="Fukushima T."/>
            <person name="Furuno M."/>
            <person name="Futaki S."/>
            <person name="Gariboldi M."/>
            <person name="Georgii-Hemming P."/>
            <person name="Gingeras T.R."/>
            <person name="Gojobori T."/>
            <person name="Green R.E."/>
            <person name="Gustincich S."/>
            <person name="Harbers M."/>
            <person name="Hayashi Y."/>
            <person name="Hensch T.K."/>
            <person name="Hirokawa N."/>
            <person name="Hill D."/>
            <person name="Huminiecki L."/>
            <person name="Iacono M."/>
            <person name="Ikeo K."/>
            <person name="Iwama A."/>
            <person name="Ishikawa T."/>
            <person name="Jakt M."/>
            <person name="Kanapin A."/>
            <person name="Katoh M."/>
            <person name="Kawasawa Y."/>
            <person name="Kelso J."/>
            <person name="Kitamura H."/>
            <person name="Kitano H."/>
            <person name="Kollias G."/>
            <person name="Krishnan S.P."/>
            <person name="Kruger A."/>
            <person name="Kummerfeld S.K."/>
            <person name="Kurochkin I.V."/>
            <person name="Lareau L.F."/>
            <person name="Lazarevic D."/>
            <person name="Lipovich L."/>
            <person name="Liu J."/>
            <person name="Liuni S."/>
            <person name="McWilliam S."/>
            <person name="Madan Babu M."/>
            <person name="Madera M."/>
            <person name="Marchionni L."/>
            <person name="Matsuda H."/>
            <person name="Matsuzawa S."/>
            <person name="Miki H."/>
            <person name="Mignone F."/>
            <person name="Miyake S."/>
            <person name="Morris K."/>
            <person name="Mottagui-Tabar S."/>
            <person name="Mulder N."/>
            <person name="Nakano N."/>
            <person name="Nakauchi H."/>
            <person name="Ng P."/>
            <person name="Nilsson R."/>
            <person name="Nishiguchi S."/>
            <person name="Nishikawa S."/>
            <person name="Nori F."/>
            <person name="Ohara O."/>
            <person name="Okazaki Y."/>
            <person name="Orlando V."/>
            <person name="Pang K.C."/>
            <person name="Pavan W.J."/>
            <person name="Pavesi G."/>
            <person name="Pesole G."/>
            <person name="Petrovsky N."/>
            <person name="Piazza S."/>
            <person name="Reed J."/>
            <person name="Reid J.F."/>
            <person name="Ring B.Z."/>
            <person name="Ringwald M."/>
            <person name="Rost B."/>
            <person name="Ruan Y."/>
            <person name="Salzberg S.L."/>
            <person name="Sandelin A."/>
            <person name="Schneider C."/>
            <person name="Schoenbach C."/>
            <person name="Sekiguchi K."/>
            <person name="Semple C.A."/>
            <person name="Seno S."/>
            <person name="Sessa L."/>
            <person name="Sheng Y."/>
            <person name="Shibata Y."/>
            <person name="Shimada H."/>
            <person name="Shimada K."/>
            <person name="Silva D."/>
            <person name="Sinclair B."/>
            <person name="Sperling S."/>
            <person name="Stupka E."/>
            <person name="Sugiura K."/>
            <person name="Sultana R."/>
            <person name="Takenaka Y."/>
            <person name="Taki K."/>
            <person name="Tammoja K."/>
            <person name="Tan S.L."/>
            <person name="Tang S."/>
            <person name="Taylor M.S."/>
            <person name="Tegner J."/>
            <person name="Teichmann S.A."/>
            <person name="Ueda H.R."/>
            <person name="van Nimwegen E."/>
            <person name="Verardo R."/>
            <person name="Wei C.L."/>
            <person name="Yagi K."/>
            <person name="Yamanishi H."/>
            <person name="Zabarovsky E."/>
            <person name="Zhu S."/>
            <person name="Zimmer A."/>
            <person name="Hide W."/>
            <person name="Bult C."/>
            <person name="Grimmond S.M."/>
            <person name="Teasdale R.D."/>
            <person name="Liu E.T."/>
            <person name="Brusic V."/>
            <person name="Quackenbush J."/>
            <person name="Wahlestedt C."/>
            <person name="Mattick J.S."/>
            <person name="Hume D.A."/>
            <person name="Kai C."/>
            <person name="Sasaki D."/>
            <person name="Tomaru Y."/>
            <person name="Fukuda S."/>
            <person name="Kanamori-Katayama M."/>
            <person name="Suzuki M."/>
            <person name="Aoki J."/>
            <person name="Arakawa T."/>
            <person name="Iida J."/>
            <person name="Imamura K."/>
            <person name="Itoh M."/>
            <person name="Kato T."/>
            <person name="Kawaji H."/>
            <person name="Kawagashira N."/>
            <person name="Kawashima T."/>
            <person name="Kojima M."/>
            <person name="Kondo S."/>
            <person name="Konno H."/>
            <person name="Nakano K."/>
            <person name="Ninomiya N."/>
            <person name="Nishio T."/>
            <person name="Okada M."/>
            <person name="Plessy C."/>
            <person name="Shibata K."/>
            <person name="Shiraki T."/>
            <person name="Suzuki S."/>
            <person name="Tagami M."/>
            <person name="Waki K."/>
            <person name="Watahiki A."/>
            <person name="Okamura-Oho Y."/>
            <person name="Suzuki H."/>
            <person name="Kawai J."/>
            <person name="Hayashizaki Y."/>
        </authorList>
    </citation>
    <scope>NUCLEOTIDE SEQUENCE [LARGE SCALE MRNA]</scope>
    <source>
        <strain>C57BL/6J</strain>
        <tissue>Cerebellum</tissue>
        <tissue>Skin</tissue>
        <tissue>Thymus</tissue>
    </source>
</reference>
<reference key="2">
    <citation type="journal article" date="2004" name="Genome Res.">
        <title>The status, quality, and expansion of the NIH full-length cDNA project: the Mammalian Gene Collection (MGC).</title>
        <authorList>
            <consortium name="The MGC Project Team"/>
        </authorList>
    </citation>
    <scope>NUCLEOTIDE SEQUENCE [LARGE SCALE MRNA]</scope>
    <source>
        <strain>FVB/N</strain>
        <tissue>Mammary tumor</tissue>
    </source>
</reference>
<reference key="3">
    <citation type="journal article" date="2010" name="Cell">
        <title>A tissue-specific atlas of mouse protein phosphorylation and expression.</title>
        <authorList>
            <person name="Huttlin E.L."/>
            <person name="Jedrychowski M.P."/>
            <person name="Elias J.E."/>
            <person name="Goswami T."/>
            <person name="Rad R."/>
            <person name="Beausoleil S.A."/>
            <person name="Villen J."/>
            <person name="Haas W."/>
            <person name="Sowa M.E."/>
            <person name="Gygi S.P."/>
        </authorList>
    </citation>
    <scope>PHOSPHORYLATION [LARGE SCALE ANALYSIS] AT SER-245; SER-250 AND SER-295</scope>
    <scope>IDENTIFICATION BY MASS SPECTROMETRY [LARGE SCALE ANALYSIS]</scope>
    <source>
        <tissue>Brain</tissue>
        <tissue>Brown adipose tissue</tissue>
        <tissue>Heart</tissue>
        <tissue>Kidney</tissue>
        <tissue>Lung</tissue>
        <tissue>Pancreas</tissue>
        <tissue>Spleen</tissue>
        <tissue>Testis</tissue>
    </source>
</reference>
<comment type="function">
    <text evidence="1">May function in transferrin receptor internalization at the plasma membrane through a cargo-specific control of clathrin-mediated endocytosis. Alternatively, may act as a negative regulator of the amino acid-induced TOR signaling by inhibiting the formation of active Rag GTPase complexes. Preferentially binds inactive Rag GTPase complexes and prevents their interaction with the mTORC1 complex inhibiting its relocalization to lysosomes and its activation. Thereby, may indirectly regulate cell growth, proliferation and autophagy (By similarity).</text>
</comment>
<comment type="subunit">
    <text evidence="1">Homodimer or homooligomer. Interacts with DNM2, EPS15, clathrin, the adapter protein complex 2/AP-2 and TFRC. Interacts with the Rag GTPases RRAGA, RRAGB, RRAGC and RRAGD; the interaction is most probably direct, preferentially occurs with their inactive GDP-bound form and is negatively regulated by amino acids (By similarity).</text>
</comment>
<comment type="subcellular location">
    <subcellularLocation>
        <location evidence="1">Membrane</location>
        <location evidence="1">Clathrin-coated pit</location>
    </subcellularLocation>
    <subcellularLocation>
        <location evidence="1">Cytoplasmic vesicle</location>
        <location evidence="1">Clathrin-coated vesicle</location>
    </subcellularLocation>
    <subcellularLocation>
        <location evidence="1">Nucleus</location>
    </subcellularLocation>
    <text evidence="1">Specifically associated with transferrin receptor-containing clathrin-coated pits and clathrin-coated vesicles. May also localize to the nucleus (By similarity).</text>
</comment>
<comment type="domain">
    <text evidence="1">The SH3 domain mediates localization to the clathrin-coated pits and vesicles. The SH3 domain mediates interaction with DNM2 and the cytoplasmic part of TFRC with a lower affinity. The SH3 domain also mediates interaction with RRAGB, RRAGC and is required for the negative regulation of mTORC1 (By similarity).</text>
</comment>
<comment type="PTM">
    <text evidence="1">Phosphorylated upon EGF stimulation. Phosphorylation prevents interaction with DNM2 (By similarity).</text>
</comment>